<feature type="chain" id="PRO_1000128992" description="Methylglyoxal synthase">
    <location>
        <begin position="1"/>
        <end position="152"/>
    </location>
</feature>
<feature type="domain" description="MGS-like" evidence="1">
    <location>
        <begin position="6"/>
        <end position="152"/>
    </location>
</feature>
<feature type="active site" description="Proton donor/acceptor" evidence="1">
    <location>
        <position position="71"/>
    </location>
</feature>
<feature type="binding site" evidence="1">
    <location>
        <position position="19"/>
    </location>
    <ligand>
        <name>substrate</name>
    </ligand>
</feature>
<feature type="binding site" evidence="1">
    <location>
        <position position="23"/>
    </location>
    <ligand>
        <name>substrate</name>
    </ligand>
</feature>
<feature type="binding site" evidence="1">
    <location>
        <begin position="45"/>
        <end position="48"/>
    </location>
    <ligand>
        <name>substrate</name>
    </ligand>
</feature>
<feature type="binding site" evidence="1">
    <location>
        <begin position="65"/>
        <end position="66"/>
    </location>
    <ligand>
        <name>substrate</name>
    </ligand>
</feature>
<feature type="binding site" evidence="1">
    <location>
        <position position="98"/>
    </location>
    <ligand>
        <name>substrate</name>
    </ligand>
</feature>
<accession>B6I938</accession>
<keyword id="KW-0456">Lyase</keyword>
<proteinExistence type="inferred from homology"/>
<gene>
    <name evidence="1" type="primary">mgsA</name>
    <name type="ordered locus">ECSE_1025</name>
</gene>
<comment type="function">
    <text evidence="1">Catalyzes the formation of methylglyoxal from dihydroxyacetone phosphate.</text>
</comment>
<comment type="catalytic activity">
    <reaction evidence="1">
        <text>dihydroxyacetone phosphate = methylglyoxal + phosphate</text>
        <dbReference type="Rhea" id="RHEA:17937"/>
        <dbReference type="ChEBI" id="CHEBI:17158"/>
        <dbReference type="ChEBI" id="CHEBI:43474"/>
        <dbReference type="ChEBI" id="CHEBI:57642"/>
        <dbReference type="EC" id="4.2.3.3"/>
    </reaction>
</comment>
<comment type="similarity">
    <text evidence="1">Belongs to the methylglyoxal synthase family.</text>
</comment>
<organism>
    <name type="scientific">Escherichia coli (strain SE11)</name>
    <dbReference type="NCBI Taxonomy" id="409438"/>
    <lineage>
        <taxon>Bacteria</taxon>
        <taxon>Pseudomonadati</taxon>
        <taxon>Pseudomonadota</taxon>
        <taxon>Gammaproteobacteria</taxon>
        <taxon>Enterobacterales</taxon>
        <taxon>Enterobacteriaceae</taxon>
        <taxon>Escherichia</taxon>
    </lineage>
</organism>
<evidence type="ECO:0000255" key="1">
    <source>
        <dbReference type="HAMAP-Rule" id="MF_00549"/>
    </source>
</evidence>
<name>MGSA_ECOSE</name>
<sequence>MELTTRTLPARKHIALVAHDHCKQMLMSWVERHQPLLEQHVLYATGTTGNLISRATGMNVNAMLSGPMGGDQQVGALISEGKIDVLIFFWDPLNAVPHDPDVKALLRLATVWNIPVATNVATADFIIQSPHFNDAVDILIPDYQRYLADRLK</sequence>
<dbReference type="EC" id="4.2.3.3" evidence="1"/>
<dbReference type="EMBL" id="AP009240">
    <property type="protein sequence ID" value="BAG76549.1"/>
    <property type="molecule type" value="Genomic_DNA"/>
</dbReference>
<dbReference type="RefSeq" id="WP_000424181.1">
    <property type="nucleotide sequence ID" value="NC_011415.1"/>
</dbReference>
<dbReference type="SMR" id="B6I938"/>
<dbReference type="GeneID" id="93776451"/>
<dbReference type="KEGG" id="ecy:ECSE_1025"/>
<dbReference type="HOGENOM" id="CLU_120420_0_1_6"/>
<dbReference type="Proteomes" id="UP000008199">
    <property type="component" value="Chromosome"/>
</dbReference>
<dbReference type="GO" id="GO:0005829">
    <property type="term" value="C:cytosol"/>
    <property type="evidence" value="ECO:0007669"/>
    <property type="project" value="TreeGrafter"/>
</dbReference>
<dbReference type="GO" id="GO:0008929">
    <property type="term" value="F:methylglyoxal synthase activity"/>
    <property type="evidence" value="ECO:0007669"/>
    <property type="project" value="UniProtKB-UniRule"/>
</dbReference>
<dbReference type="GO" id="GO:0019242">
    <property type="term" value="P:methylglyoxal biosynthetic process"/>
    <property type="evidence" value="ECO:0007669"/>
    <property type="project" value="UniProtKB-UniRule"/>
</dbReference>
<dbReference type="CDD" id="cd01422">
    <property type="entry name" value="MGS"/>
    <property type="match status" value="1"/>
</dbReference>
<dbReference type="FunFam" id="3.40.50.1380:FF:000002">
    <property type="entry name" value="Methylglyoxal synthase"/>
    <property type="match status" value="1"/>
</dbReference>
<dbReference type="Gene3D" id="3.40.50.1380">
    <property type="entry name" value="Methylglyoxal synthase-like domain"/>
    <property type="match status" value="1"/>
</dbReference>
<dbReference type="HAMAP" id="MF_00549">
    <property type="entry name" value="Methylglyoxal_synth"/>
    <property type="match status" value="1"/>
</dbReference>
<dbReference type="InterPro" id="IPR004363">
    <property type="entry name" value="Methylgl_synth"/>
</dbReference>
<dbReference type="InterPro" id="IPR018148">
    <property type="entry name" value="Methylglyoxal_synth_AS"/>
</dbReference>
<dbReference type="InterPro" id="IPR011607">
    <property type="entry name" value="MGS-like_dom"/>
</dbReference>
<dbReference type="InterPro" id="IPR036914">
    <property type="entry name" value="MGS-like_dom_sf"/>
</dbReference>
<dbReference type="NCBIfam" id="TIGR00160">
    <property type="entry name" value="MGSA"/>
    <property type="match status" value="1"/>
</dbReference>
<dbReference type="NCBIfam" id="NF003559">
    <property type="entry name" value="PRK05234.1"/>
    <property type="match status" value="1"/>
</dbReference>
<dbReference type="PANTHER" id="PTHR30492">
    <property type="entry name" value="METHYLGLYOXAL SYNTHASE"/>
    <property type="match status" value="1"/>
</dbReference>
<dbReference type="PANTHER" id="PTHR30492:SF0">
    <property type="entry name" value="METHYLGLYOXAL SYNTHASE"/>
    <property type="match status" value="1"/>
</dbReference>
<dbReference type="Pfam" id="PF02142">
    <property type="entry name" value="MGS"/>
    <property type="match status" value="1"/>
</dbReference>
<dbReference type="PIRSF" id="PIRSF006614">
    <property type="entry name" value="Methylglyox_syn"/>
    <property type="match status" value="1"/>
</dbReference>
<dbReference type="SMART" id="SM00851">
    <property type="entry name" value="MGS"/>
    <property type="match status" value="1"/>
</dbReference>
<dbReference type="SUPFAM" id="SSF52335">
    <property type="entry name" value="Methylglyoxal synthase-like"/>
    <property type="match status" value="1"/>
</dbReference>
<dbReference type="PROSITE" id="PS01335">
    <property type="entry name" value="METHYLGLYOXAL_SYNTH"/>
    <property type="match status" value="1"/>
</dbReference>
<dbReference type="PROSITE" id="PS51855">
    <property type="entry name" value="MGS"/>
    <property type="match status" value="1"/>
</dbReference>
<protein>
    <recommendedName>
        <fullName evidence="1">Methylglyoxal synthase</fullName>
        <shortName evidence="1">MGS</shortName>
        <ecNumber evidence="1">4.2.3.3</ecNumber>
    </recommendedName>
</protein>
<reference key="1">
    <citation type="journal article" date="2008" name="DNA Res.">
        <title>Complete genome sequence and comparative analysis of the wild-type commensal Escherichia coli strain SE11 isolated from a healthy adult.</title>
        <authorList>
            <person name="Oshima K."/>
            <person name="Toh H."/>
            <person name="Ogura Y."/>
            <person name="Sasamoto H."/>
            <person name="Morita H."/>
            <person name="Park S.-H."/>
            <person name="Ooka T."/>
            <person name="Iyoda S."/>
            <person name="Taylor T.D."/>
            <person name="Hayashi T."/>
            <person name="Itoh K."/>
            <person name="Hattori M."/>
        </authorList>
    </citation>
    <scope>NUCLEOTIDE SEQUENCE [LARGE SCALE GENOMIC DNA]</scope>
    <source>
        <strain>SE11</strain>
    </source>
</reference>